<comment type="catalytic activity">
    <reaction>
        <text>ATP + H2O = ADP + phosphate + H(+)</text>
        <dbReference type="Rhea" id="RHEA:13065"/>
        <dbReference type="ChEBI" id="CHEBI:15377"/>
        <dbReference type="ChEBI" id="CHEBI:15378"/>
        <dbReference type="ChEBI" id="CHEBI:30616"/>
        <dbReference type="ChEBI" id="CHEBI:43474"/>
        <dbReference type="ChEBI" id="CHEBI:456216"/>
    </reaction>
</comment>
<comment type="subcellular location">
    <subcellularLocation>
        <location evidence="4">Cell membrane</location>
        <topology evidence="4">Multi-pass membrane protein</topology>
    </subcellularLocation>
</comment>
<comment type="induction">
    <text evidence="3">Transcription is repressed by NmtR. Induced by nickel and, to some extent, cobalt.</text>
</comment>
<comment type="similarity">
    <text evidence="4">Belongs to the cation transport ATPase (P-type) (TC 3.A.3) family. Type IB subfamily.</text>
</comment>
<reference key="1">
    <citation type="journal article" date="1998" name="Nature">
        <title>Deciphering the biology of Mycobacterium tuberculosis from the complete genome sequence.</title>
        <authorList>
            <person name="Cole S.T."/>
            <person name="Brosch R."/>
            <person name="Parkhill J."/>
            <person name="Garnier T."/>
            <person name="Churcher C.M."/>
            <person name="Harris D.E."/>
            <person name="Gordon S.V."/>
            <person name="Eiglmeier K."/>
            <person name="Gas S."/>
            <person name="Barry C.E. III"/>
            <person name="Tekaia F."/>
            <person name="Badcock K."/>
            <person name="Basham D."/>
            <person name="Brown D."/>
            <person name="Chillingworth T."/>
            <person name="Connor R."/>
            <person name="Davies R.M."/>
            <person name="Devlin K."/>
            <person name="Feltwell T."/>
            <person name="Gentles S."/>
            <person name="Hamlin N."/>
            <person name="Holroyd S."/>
            <person name="Hornsby T."/>
            <person name="Jagels K."/>
            <person name="Krogh A."/>
            <person name="McLean J."/>
            <person name="Moule S."/>
            <person name="Murphy L.D."/>
            <person name="Oliver S."/>
            <person name="Osborne J."/>
            <person name="Quail M.A."/>
            <person name="Rajandream M.A."/>
            <person name="Rogers J."/>
            <person name="Rutter S."/>
            <person name="Seeger K."/>
            <person name="Skelton S."/>
            <person name="Squares S."/>
            <person name="Squares R."/>
            <person name="Sulston J.E."/>
            <person name="Taylor K."/>
            <person name="Whitehead S."/>
            <person name="Barrell B.G."/>
        </authorList>
    </citation>
    <scope>NUCLEOTIDE SEQUENCE [LARGE SCALE GENOMIC DNA]</scope>
    <source>
        <strain>ATCC 25618 / H37Rv</strain>
    </source>
</reference>
<reference key="2">
    <citation type="journal article" date="2002" name="J. Biol. Chem.">
        <title>A nickel-cobalt-sensing ArsR-SmtB family repressor. Contributions of cytosol and effector binding sites to metal selectivity.</title>
        <authorList>
            <person name="Cavet J.S."/>
            <person name="Meng W."/>
            <person name="Pennella M.A."/>
            <person name="Appelhoff R.J."/>
            <person name="Giedroc D.P."/>
            <person name="Robinson N.J."/>
        </authorList>
    </citation>
    <scope>INDUCTION</scope>
    <source>
        <strain>ATCC 25618 / H37Rv</strain>
    </source>
</reference>
<organism>
    <name type="scientific">Mycobacterium tuberculosis (strain ATCC 25618 / H37Rv)</name>
    <dbReference type="NCBI Taxonomy" id="83332"/>
    <lineage>
        <taxon>Bacteria</taxon>
        <taxon>Bacillati</taxon>
        <taxon>Actinomycetota</taxon>
        <taxon>Actinomycetes</taxon>
        <taxon>Mycobacteriales</taxon>
        <taxon>Mycobacteriaceae</taxon>
        <taxon>Mycobacterium</taxon>
        <taxon>Mycobacterium tuberculosis complex</taxon>
    </lineage>
</organism>
<name>CTPJ_MYCTU</name>
<accession>P9WPT7</accession>
<accession>F2GFW6</accession>
<accession>L0TGM0</accession>
<accession>O69710</accession>
<accession>Q7D4Y4</accession>
<gene>
    <name type="primary">ctpJ</name>
    <name type="synonym">nmtA</name>
    <name type="ordered locus">Rv3743c</name>
</gene>
<evidence type="ECO:0000250" key="1"/>
<evidence type="ECO:0000255" key="2"/>
<evidence type="ECO:0000269" key="3">
    <source>
    </source>
</evidence>
<evidence type="ECO:0000305" key="4"/>
<proteinExistence type="evidence at transcript level"/>
<sequence>MAVRELSPARCTSASPLVLARRTKLFALSEMRWAALALGLFSAGLLTQLCGAPQWVRWALFLACYATGGWEPGLAGLQALQRRTLDVDLLMVVAAIGAAAIGQIAEGALLIVIFATSGALEALVTARTADSVRGLMGLAPGTATRVGAGGGEETVNAADLRIGDIVLVRPGERISADATVLAGGSEVDQATVTGEPLPVDKSIGDQVFAGTVNGTGALRIRVDRLARDSVVARIATLVEQASQTKARTQLFIEKVEQRYSIGMVAVTLAVFAVPPLWGETLQRALLRAMTFMIVASPCAVVLATMPPLLAAIANAGRHGVLAKSAIVMEQLGTTTRIAFDKTGTLTRGTPELAGIWVYERRFTDDELLRLAAAAEYPSEHPLGAAIVKAAQSRRIRLPTVGEFTAHPGCRVTARVDGHVIAVGSATALLGTAGAAALEASMITAVDFLQGEGYTVVVVVCDSHPVGLLAITDQLRPEAAAAISAATKLTGAKPVLLTGDNRATADRLGVQVGIDDVRAGLLPDDKVAAVRQLQAGGARLTVVGDGINDAPALAAAHVGIAMGSARSELTLQTADAVVVRDDLTTIPTVIAMSRRARRIVVANLIVAVTFIAGLVVWDLAFTLPLPLGVARHEGSTIIVGLNGLRLLRHTAWRRAAGTAHR</sequence>
<protein>
    <recommendedName>
        <fullName>Probable cation-transporting P-type ATPase J</fullName>
        <ecNumber>7.2.2.-</ecNumber>
    </recommendedName>
</protein>
<dbReference type="EC" id="7.2.2.-"/>
<dbReference type="EMBL" id="AL123456">
    <property type="protein sequence ID" value="CCP46570.1"/>
    <property type="molecule type" value="Genomic_DNA"/>
</dbReference>
<dbReference type="PIR" id="H70798">
    <property type="entry name" value="H70798"/>
</dbReference>
<dbReference type="RefSeq" id="NP_218260.1">
    <property type="nucleotide sequence ID" value="NC_000962.3"/>
</dbReference>
<dbReference type="RefSeq" id="WP_003899665.1">
    <property type="nucleotide sequence ID" value="NZ_NVQJ01000009.1"/>
</dbReference>
<dbReference type="SMR" id="P9WPT7"/>
<dbReference type="FunCoup" id="P9WPT7">
    <property type="interactions" value="1"/>
</dbReference>
<dbReference type="STRING" id="83332.Rv3743c"/>
<dbReference type="PaxDb" id="83332-Rv3743c"/>
<dbReference type="DNASU" id="885106"/>
<dbReference type="GeneID" id="885106"/>
<dbReference type="KEGG" id="mtu:Rv3743c"/>
<dbReference type="KEGG" id="mtv:RVBD_3743c"/>
<dbReference type="TubercuList" id="Rv3743c"/>
<dbReference type="eggNOG" id="COG2217">
    <property type="taxonomic scope" value="Bacteria"/>
</dbReference>
<dbReference type="InParanoid" id="P9WPT7"/>
<dbReference type="OrthoDB" id="7059309at2"/>
<dbReference type="PhylomeDB" id="P9WPT7"/>
<dbReference type="Proteomes" id="UP000001584">
    <property type="component" value="Chromosome"/>
</dbReference>
<dbReference type="GO" id="GO:0005886">
    <property type="term" value="C:plasma membrane"/>
    <property type="evidence" value="ECO:0007669"/>
    <property type="project" value="UniProtKB-SubCell"/>
</dbReference>
<dbReference type="GO" id="GO:0005524">
    <property type="term" value="F:ATP binding"/>
    <property type="evidence" value="ECO:0007669"/>
    <property type="project" value="UniProtKB-KW"/>
</dbReference>
<dbReference type="GO" id="GO:0016887">
    <property type="term" value="F:ATP hydrolysis activity"/>
    <property type="evidence" value="ECO:0007669"/>
    <property type="project" value="InterPro"/>
</dbReference>
<dbReference type="GO" id="GO:0019829">
    <property type="term" value="F:ATPase-coupled monoatomic cation transmembrane transporter activity"/>
    <property type="evidence" value="ECO:0007669"/>
    <property type="project" value="InterPro"/>
</dbReference>
<dbReference type="GO" id="GO:0046872">
    <property type="term" value="F:metal ion binding"/>
    <property type="evidence" value="ECO:0007669"/>
    <property type="project" value="UniProtKB-KW"/>
</dbReference>
<dbReference type="CDD" id="cd07551">
    <property type="entry name" value="P-type_ATPase_HM_ZosA_PfeT-like"/>
    <property type="match status" value="1"/>
</dbReference>
<dbReference type="FunFam" id="2.70.150.10:FF:000002">
    <property type="entry name" value="Copper-transporting ATPase 1, putative"/>
    <property type="match status" value="1"/>
</dbReference>
<dbReference type="Gene3D" id="3.40.1110.10">
    <property type="entry name" value="Calcium-transporting ATPase, cytoplasmic domain N"/>
    <property type="match status" value="1"/>
</dbReference>
<dbReference type="Gene3D" id="2.70.150.10">
    <property type="entry name" value="Calcium-transporting ATPase, cytoplasmic transduction domain A"/>
    <property type="match status" value="1"/>
</dbReference>
<dbReference type="Gene3D" id="3.40.50.1000">
    <property type="entry name" value="HAD superfamily/HAD-like"/>
    <property type="match status" value="1"/>
</dbReference>
<dbReference type="InterPro" id="IPR023299">
    <property type="entry name" value="ATPase_P-typ_cyto_dom_N"/>
</dbReference>
<dbReference type="InterPro" id="IPR018303">
    <property type="entry name" value="ATPase_P-typ_P_site"/>
</dbReference>
<dbReference type="InterPro" id="IPR023298">
    <property type="entry name" value="ATPase_P-typ_TM_dom_sf"/>
</dbReference>
<dbReference type="InterPro" id="IPR008250">
    <property type="entry name" value="ATPase_P-typ_transduc_dom_A_sf"/>
</dbReference>
<dbReference type="InterPro" id="IPR051949">
    <property type="entry name" value="Cation_Transport_ATPase"/>
</dbReference>
<dbReference type="InterPro" id="IPR036412">
    <property type="entry name" value="HAD-like_sf"/>
</dbReference>
<dbReference type="InterPro" id="IPR023214">
    <property type="entry name" value="HAD_sf"/>
</dbReference>
<dbReference type="InterPro" id="IPR027256">
    <property type="entry name" value="P-typ_ATPase_IB"/>
</dbReference>
<dbReference type="InterPro" id="IPR001757">
    <property type="entry name" value="P_typ_ATPase"/>
</dbReference>
<dbReference type="InterPro" id="IPR044492">
    <property type="entry name" value="P_typ_ATPase_HD_dom"/>
</dbReference>
<dbReference type="NCBIfam" id="TIGR01525">
    <property type="entry name" value="ATPase-IB_hvy"/>
    <property type="match status" value="1"/>
</dbReference>
<dbReference type="NCBIfam" id="TIGR01494">
    <property type="entry name" value="ATPase_P-type"/>
    <property type="match status" value="1"/>
</dbReference>
<dbReference type="PANTHER" id="PTHR43079:SF1">
    <property type="entry name" value="CADMIUM_ZINC-TRANSPORTING ATPASE HMA1, CHLOROPLASTIC-RELATED"/>
    <property type="match status" value="1"/>
</dbReference>
<dbReference type="PANTHER" id="PTHR43079">
    <property type="entry name" value="PROBABLE CADMIUM/ZINC-TRANSPORTING ATPASE HMA1"/>
    <property type="match status" value="1"/>
</dbReference>
<dbReference type="Pfam" id="PF00122">
    <property type="entry name" value="E1-E2_ATPase"/>
    <property type="match status" value="1"/>
</dbReference>
<dbReference type="Pfam" id="PF00702">
    <property type="entry name" value="Hydrolase"/>
    <property type="match status" value="1"/>
</dbReference>
<dbReference type="PRINTS" id="PR00119">
    <property type="entry name" value="CATATPASE"/>
</dbReference>
<dbReference type="PRINTS" id="PR00941">
    <property type="entry name" value="CDATPASE"/>
</dbReference>
<dbReference type="SFLD" id="SFLDS00003">
    <property type="entry name" value="Haloacid_Dehalogenase"/>
    <property type="match status" value="1"/>
</dbReference>
<dbReference type="SFLD" id="SFLDF00027">
    <property type="entry name" value="p-type_atpase"/>
    <property type="match status" value="1"/>
</dbReference>
<dbReference type="SUPFAM" id="SSF81653">
    <property type="entry name" value="Calcium ATPase, transduction domain A"/>
    <property type="match status" value="1"/>
</dbReference>
<dbReference type="SUPFAM" id="SSF81665">
    <property type="entry name" value="Calcium ATPase, transmembrane domain M"/>
    <property type="match status" value="1"/>
</dbReference>
<dbReference type="SUPFAM" id="SSF56784">
    <property type="entry name" value="HAD-like"/>
    <property type="match status" value="1"/>
</dbReference>
<dbReference type="SUPFAM" id="SSF81660">
    <property type="entry name" value="Metal cation-transporting ATPase, ATP-binding domain N"/>
    <property type="match status" value="1"/>
</dbReference>
<dbReference type="PROSITE" id="PS00154">
    <property type="entry name" value="ATPASE_E1_E2"/>
    <property type="match status" value="1"/>
</dbReference>
<keyword id="KW-0067">ATP-binding</keyword>
<keyword id="KW-1003">Cell membrane</keyword>
<keyword id="KW-0460">Magnesium</keyword>
<keyword id="KW-0472">Membrane</keyword>
<keyword id="KW-0479">Metal-binding</keyword>
<keyword id="KW-0547">Nucleotide-binding</keyword>
<keyword id="KW-0597">Phosphoprotein</keyword>
<keyword id="KW-1185">Reference proteome</keyword>
<keyword id="KW-1278">Translocase</keyword>
<keyword id="KW-0812">Transmembrane</keyword>
<keyword id="KW-1133">Transmembrane helix</keyword>
<feature type="chain" id="PRO_0000419203" description="Probable cation-transporting P-type ATPase J">
    <location>
        <begin position="1"/>
        <end position="660"/>
    </location>
</feature>
<feature type="transmembrane region" description="Helical" evidence="2">
    <location>
        <begin position="33"/>
        <end position="53"/>
    </location>
</feature>
<feature type="transmembrane region" description="Helical" evidence="2">
    <location>
        <begin position="60"/>
        <end position="80"/>
    </location>
</feature>
<feature type="transmembrane region" description="Helical" evidence="2">
    <location>
        <begin position="94"/>
        <end position="114"/>
    </location>
</feature>
<feature type="transmembrane region" description="Helical" evidence="2">
    <location>
        <begin position="261"/>
        <end position="281"/>
    </location>
</feature>
<feature type="transmembrane region" description="Helical" evidence="2">
    <location>
        <begin position="292"/>
        <end position="312"/>
    </location>
</feature>
<feature type="transmembrane region" description="Helical" evidence="2">
    <location>
        <begin position="598"/>
        <end position="618"/>
    </location>
</feature>
<feature type="active site" description="4-aspartylphosphate intermediate" evidence="1">
    <location>
        <position position="340"/>
    </location>
</feature>
<feature type="binding site" evidence="1">
    <location>
        <position position="544"/>
    </location>
    <ligand>
        <name>Mg(2+)</name>
        <dbReference type="ChEBI" id="CHEBI:18420"/>
    </ligand>
</feature>
<feature type="binding site" evidence="1">
    <location>
        <position position="548"/>
    </location>
    <ligand>
        <name>Mg(2+)</name>
        <dbReference type="ChEBI" id="CHEBI:18420"/>
    </ligand>
</feature>